<dbReference type="EMBL" id="CH379060">
    <property type="protein sequence ID" value="EAL33865.2"/>
    <property type="molecule type" value="Genomic_DNA"/>
</dbReference>
<dbReference type="RefSeq" id="XP_001356799.2">
    <property type="nucleotide sequence ID" value="XM_001356763.3"/>
</dbReference>
<dbReference type="FunCoup" id="Q29M30">
    <property type="interactions" value="2"/>
</dbReference>
<dbReference type="STRING" id="46245.Q29M30"/>
<dbReference type="EnsemblMetazoa" id="FBtr0281436">
    <property type="protein sequence ID" value="FBpp0279874"/>
    <property type="gene ID" value="FBgn0074218"/>
</dbReference>
<dbReference type="GeneID" id="4817176"/>
<dbReference type="KEGG" id="dpo:4817176"/>
<dbReference type="CTD" id="34558"/>
<dbReference type="HOGENOM" id="CLU_169196_0_0_1"/>
<dbReference type="InParanoid" id="Q29M30"/>
<dbReference type="OMA" id="CAQEAQA"/>
<dbReference type="Proteomes" id="UP000001819">
    <property type="component" value="Chromosome 4"/>
</dbReference>
<dbReference type="Bgee" id="FBgn0074218">
    <property type="expression patterns" value="Expressed in female reproductive system and 1 other cell type or tissue"/>
</dbReference>
<dbReference type="GO" id="GO:0005615">
    <property type="term" value="C:extracellular space"/>
    <property type="evidence" value="ECO:0000250"/>
    <property type="project" value="UniProtKB"/>
</dbReference>
<dbReference type="GO" id="GO:0008316">
    <property type="term" value="F:structural constituent of vitelline membrane"/>
    <property type="evidence" value="ECO:0000250"/>
    <property type="project" value="UniProtKB"/>
</dbReference>
<dbReference type="GO" id="GO:0007305">
    <property type="term" value="P:vitelline membrane formation involved in chorion-containing eggshell formation"/>
    <property type="evidence" value="ECO:0000250"/>
    <property type="project" value="UniProtKB"/>
</dbReference>
<dbReference type="InterPro" id="IPR013135">
    <property type="entry name" value="Vitelline_membr_Cys-rich-dom"/>
</dbReference>
<dbReference type="Pfam" id="PF10542">
    <property type="entry name" value="Vitelline_membr"/>
    <property type="match status" value="1"/>
</dbReference>
<dbReference type="PROSITE" id="PS51137">
    <property type="entry name" value="VM"/>
    <property type="match status" value="1"/>
</dbReference>
<sequence>MKTVAFLAVVVLFAAFACASCSSSYAAPAPAPAAAPASSYSSVPAPPCPKNYLFSCQPNLVPAPCAQQAAPAAYGSAGAYTEQVPSYIGFAPYQQLQQYHQRIGNAALIDELRSLGQGIQGQQY</sequence>
<feature type="signal peptide" evidence="2">
    <location>
        <begin position="1"/>
        <end position="19"/>
    </location>
</feature>
<feature type="chain" id="PRO_0000398798" description="Vitelline membrane protein Vm32E" evidence="2">
    <location>
        <begin position="20"/>
        <end position="124"/>
    </location>
</feature>
<feature type="domain" description="VM" evidence="3">
    <location>
        <begin position="42"/>
        <end position="81"/>
    </location>
</feature>
<comment type="function">
    <text evidence="1">Major early eggshell protein.</text>
</comment>
<comment type="subcellular location">
    <subcellularLocation>
        <location evidence="1">Secreted</location>
    </subcellularLocation>
</comment>
<comment type="similarity">
    <text evidence="4">Belongs to the vitelline membrane family.</text>
</comment>
<gene>
    <name evidence="1" type="primary">Vm32E</name>
    <name type="ORF">GA14189</name>
</gene>
<evidence type="ECO:0000250" key="1">
    <source>
        <dbReference type="UniProtKB" id="Q9VKI3"/>
    </source>
</evidence>
<evidence type="ECO:0000255" key="2"/>
<evidence type="ECO:0000255" key="3">
    <source>
        <dbReference type="PROSITE-ProRule" id="PRU00483"/>
    </source>
</evidence>
<evidence type="ECO:0000305" key="4"/>
<evidence type="ECO:0000312" key="5">
    <source>
        <dbReference type="EMBL" id="EAL33865.2"/>
    </source>
</evidence>
<protein>
    <recommendedName>
        <fullName evidence="1">Vitelline membrane protein Vm32E</fullName>
    </recommendedName>
</protein>
<reference evidence="5" key="1">
    <citation type="journal article" date="2005" name="Genome Res.">
        <title>Comparative genome sequencing of Drosophila pseudoobscura: chromosomal, gene, and cis-element evolution.</title>
        <authorList>
            <person name="Richards S."/>
            <person name="Liu Y."/>
            <person name="Bettencourt B.R."/>
            <person name="Hradecky P."/>
            <person name="Letovsky S."/>
            <person name="Nielsen R."/>
            <person name="Thornton K."/>
            <person name="Hubisz M.J."/>
            <person name="Chen R."/>
            <person name="Meisel R.P."/>
            <person name="Couronne O."/>
            <person name="Hua S."/>
            <person name="Smith M.A."/>
            <person name="Zhang P."/>
            <person name="Liu J."/>
            <person name="Bussemaker H.J."/>
            <person name="van Batenburg M.F."/>
            <person name="Howells S.L."/>
            <person name="Scherer S.E."/>
            <person name="Sodergren E."/>
            <person name="Matthews B.B."/>
            <person name="Crosby M.A."/>
            <person name="Schroeder A.J."/>
            <person name="Ortiz-Barrientos D."/>
            <person name="Rives C.M."/>
            <person name="Metzker M.L."/>
            <person name="Muzny D.M."/>
            <person name="Scott G."/>
            <person name="Steffen D."/>
            <person name="Wheeler D.A."/>
            <person name="Worley K.C."/>
            <person name="Havlak P."/>
            <person name="Durbin K.J."/>
            <person name="Egan A."/>
            <person name="Gill R."/>
            <person name="Hume J."/>
            <person name="Morgan M.B."/>
            <person name="Miner G."/>
            <person name="Hamilton C."/>
            <person name="Huang Y."/>
            <person name="Waldron L."/>
            <person name="Verduzco D."/>
            <person name="Clerc-Blankenburg K.P."/>
            <person name="Dubchak I."/>
            <person name="Noor M.A.F."/>
            <person name="Anderson W."/>
            <person name="White K.P."/>
            <person name="Clark A.G."/>
            <person name="Schaeffer S.W."/>
            <person name="Gelbart W.M."/>
            <person name="Weinstock G.M."/>
            <person name="Gibbs R.A."/>
        </authorList>
    </citation>
    <scope>NUCLEOTIDE SEQUENCE [LARGE SCALE GENOMIC DNA]</scope>
    <source>
        <strain>MV2-25 / Tucson 14011-0121.94</strain>
    </source>
</reference>
<organism>
    <name type="scientific">Drosophila pseudoobscura pseudoobscura</name>
    <name type="common">Fruit fly</name>
    <dbReference type="NCBI Taxonomy" id="46245"/>
    <lineage>
        <taxon>Eukaryota</taxon>
        <taxon>Metazoa</taxon>
        <taxon>Ecdysozoa</taxon>
        <taxon>Arthropoda</taxon>
        <taxon>Hexapoda</taxon>
        <taxon>Insecta</taxon>
        <taxon>Pterygota</taxon>
        <taxon>Neoptera</taxon>
        <taxon>Endopterygota</taxon>
        <taxon>Diptera</taxon>
        <taxon>Brachycera</taxon>
        <taxon>Muscomorpha</taxon>
        <taxon>Ephydroidea</taxon>
        <taxon>Drosophilidae</taxon>
        <taxon>Drosophila</taxon>
        <taxon>Sophophora</taxon>
    </lineage>
</organism>
<accession>Q29M30</accession>
<proteinExistence type="inferred from homology"/>
<keyword id="KW-1185">Reference proteome</keyword>
<keyword id="KW-0964">Secreted</keyword>
<keyword id="KW-0732">Signal</keyword>
<name>VTU4_DROPS</name>